<keyword id="KW-0273">Eye lens protein</keyword>
<keyword id="KW-1185">Reference proteome</keyword>
<accession>P27014</accession>
<proteinExistence type="evidence at transcript level"/>
<name>SCRY2_OCTVU</name>
<comment type="function">
    <text>S-crystallins are structural components of squids and octopi eye lens. Contains relatively little GST activity (1/1000 of that of mammalian GST enzyme).</text>
</comment>
<comment type="tissue specificity">
    <text>Lens.</text>
</comment>
<comment type="similarity">
    <text evidence="1">Belongs to the GST superfamily.</text>
</comment>
<organism>
    <name type="scientific">Octopus vulgaris</name>
    <name type="common">Common octopus</name>
    <dbReference type="NCBI Taxonomy" id="6645"/>
    <lineage>
        <taxon>Eukaryota</taxon>
        <taxon>Metazoa</taxon>
        <taxon>Spiralia</taxon>
        <taxon>Lophotrochozoa</taxon>
        <taxon>Mollusca</taxon>
        <taxon>Cephalopoda</taxon>
        <taxon>Coleoidea</taxon>
        <taxon>Octopodiformes</taxon>
        <taxon>Octopoda</taxon>
        <taxon>Incirrata</taxon>
        <taxon>Octopodidae</taxon>
        <taxon>Octopus</taxon>
    </lineage>
</organism>
<reference key="1">
    <citation type="journal article" date="1992" name="Biochem. Int.">
        <title>Facile cloning and sequencing of S-crystallin genes from octopus lenses based on polymerase chain reaction.</title>
        <authorList>
            <person name="Lin C.-W."/>
            <person name="Chiou S.-H."/>
        </authorList>
    </citation>
    <scope>NUCLEOTIDE SEQUENCE [MRNA]</scope>
    <source>
        <tissue>Lens</tissue>
    </source>
</reference>
<reference key="2">
    <citation type="journal article" date="1995" name="Biochem. J.">
        <title>Octopus S-crystallins with endogenous glutathione S-transferase (GST) activity: sequence comparison and evolutionary relationships with authentic GST enzymes.</title>
        <authorList>
            <person name="Chiou S.-H."/>
            <person name="Yu C.-W."/>
            <person name="Lin C.-W."/>
            <person name="Pan F.-M."/>
            <person name="Lu S.-F."/>
            <person name="Lee H.-J."/>
            <person name="Chang G.-G."/>
        </authorList>
    </citation>
    <scope>NUCLEOTIDE SEQUENCE [MRNA]</scope>
</reference>
<feature type="chain" id="PRO_0000185997" description="S-crystallin 2">
    <location>
        <begin position="1"/>
        <end position="215"/>
    </location>
</feature>
<feature type="domain" description="GST N-terminal">
    <location>
        <begin position="2"/>
        <end position="80"/>
    </location>
</feature>
<feature type="domain" description="GST C-terminal">
    <location>
        <begin position="82"/>
        <end position="215"/>
    </location>
</feature>
<sequence length="215" mass="25533">MPSYTLHYFNHRGRAEICRMLFAAAGVQYNDRRVDCSEWTGMRNQMPCSMMPMLEIDNRHQIPQSMAIARYLAREFGFHGRNNLDMARVDFISDCFYDILDDYLRMYHDKDGRMMFQRSYDNGSSSERRMRFQETCRRILPFMERTLEMRNGGNQFFMGDQMTMADLMCYCALENPLTDDTSMLSSYPKLQALRNRVMSHMKMSPYLKSRSSTDF</sequence>
<gene>
    <name type="primary">OCTS2</name>
</gene>
<evidence type="ECO:0000305" key="1"/>
<protein>
    <recommendedName>
        <fullName>S-crystallin 2</fullName>
    </recommendedName>
</protein>
<dbReference type="EMBL" id="X65544">
    <property type="protein sequence ID" value="CAA46512.1"/>
    <property type="molecule type" value="mRNA"/>
</dbReference>
<dbReference type="PIR" id="S56759">
    <property type="entry name" value="S56759"/>
</dbReference>
<dbReference type="SMR" id="P27014"/>
<dbReference type="Proteomes" id="UP000515154">
    <property type="component" value="Unplaced"/>
</dbReference>
<dbReference type="GO" id="GO:0004364">
    <property type="term" value="F:glutathione transferase activity"/>
    <property type="evidence" value="ECO:0007669"/>
    <property type="project" value="TreeGrafter"/>
</dbReference>
<dbReference type="GO" id="GO:0005212">
    <property type="term" value="F:structural constituent of eye lens"/>
    <property type="evidence" value="ECO:0007669"/>
    <property type="project" value="UniProtKB-KW"/>
</dbReference>
<dbReference type="GO" id="GO:0006749">
    <property type="term" value="P:glutathione metabolic process"/>
    <property type="evidence" value="ECO:0007669"/>
    <property type="project" value="TreeGrafter"/>
</dbReference>
<dbReference type="CDD" id="cd03192">
    <property type="entry name" value="GST_C_Sigma_like"/>
    <property type="match status" value="1"/>
</dbReference>
<dbReference type="CDD" id="cd03039">
    <property type="entry name" value="GST_N_Sigma_like"/>
    <property type="match status" value="1"/>
</dbReference>
<dbReference type="FunFam" id="3.40.30.10:FF:000258">
    <property type="entry name" value="Glutathione S-transferase"/>
    <property type="match status" value="1"/>
</dbReference>
<dbReference type="Gene3D" id="1.20.1050.10">
    <property type="match status" value="1"/>
</dbReference>
<dbReference type="Gene3D" id="3.40.30.10">
    <property type="entry name" value="Glutaredoxin"/>
    <property type="match status" value="1"/>
</dbReference>
<dbReference type="InterPro" id="IPR010987">
    <property type="entry name" value="Glutathione-S-Trfase_C-like"/>
</dbReference>
<dbReference type="InterPro" id="IPR036282">
    <property type="entry name" value="Glutathione-S-Trfase_C_sf"/>
</dbReference>
<dbReference type="InterPro" id="IPR004045">
    <property type="entry name" value="Glutathione_S-Trfase_N"/>
</dbReference>
<dbReference type="InterPro" id="IPR004046">
    <property type="entry name" value="GST_C"/>
</dbReference>
<dbReference type="InterPro" id="IPR050213">
    <property type="entry name" value="GST_superfamily"/>
</dbReference>
<dbReference type="InterPro" id="IPR003083">
    <property type="entry name" value="S-crystallin"/>
</dbReference>
<dbReference type="InterPro" id="IPR036249">
    <property type="entry name" value="Thioredoxin-like_sf"/>
</dbReference>
<dbReference type="PANTHER" id="PTHR11571">
    <property type="entry name" value="GLUTATHIONE S-TRANSFERASE"/>
    <property type="match status" value="1"/>
</dbReference>
<dbReference type="PANTHER" id="PTHR11571:SF150">
    <property type="entry name" value="GLUTATHIONE S-TRANSFERASE"/>
    <property type="match status" value="1"/>
</dbReference>
<dbReference type="Pfam" id="PF14497">
    <property type="entry name" value="GST_C_3"/>
    <property type="match status" value="1"/>
</dbReference>
<dbReference type="Pfam" id="PF02798">
    <property type="entry name" value="GST_N"/>
    <property type="match status" value="1"/>
</dbReference>
<dbReference type="PRINTS" id="PR01269">
    <property type="entry name" value="SCRYSTALLIN"/>
</dbReference>
<dbReference type="SFLD" id="SFLDG01205">
    <property type="entry name" value="AMPS.1"/>
    <property type="match status" value="1"/>
</dbReference>
<dbReference type="SFLD" id="SFLDG00363">
    <property type="entry name" value="AMPS_(cytGST):_Alpha-__Mu-__Pi"/>
    <property type="match status" value="1"/>
</dbReference>
<dbReference type="SUPFAM" id="SSF47616">
    <property type="entry name" value="GST C-terminal domain-like"/>
    <property type="match status" value="1"/>
</dbReference>
<dbReference type="SUPFAM" id="SSF52833">
    <property type="entry name" value="Thioredoxin-like"/>
    <property type="match status" value="1"/>
</dbReference>
<dbReference type="PROSITE" id="PS50405">
    <property type="entry name" value="GST_CTER"/>
    <property type="match status" value="1"/>
</dbReference>
<dbReference type="PROSITE" id="PS50404">
    <property type="entry name" value="GST_NTER"/>
    <property type="match status" value="1"/>
</dbReference>